<sequence length="347" mass="37518">MRILGIETSCDETGVAIYDEEKGLVANQLYSQIEMHADYGGVVPELASRDHIRKTLPLIQEALKEANLTAADIDGVVYTAGPGLVGALLVGSTIARSLAYAWNVPALGVHHMEGHLMAPMLEDNPPAFPFVALLISGGHTQLVKVEGVGQYEILGESIDDAAGEAFDKTGKLLGLDYPAGVAVSQLAEKGTPNRFVFPRPMTDRPGLDFSFSGLKTFAANTINANLDENGRLDEQTRCDIAHAFQQAVVDTIIIKCKRALQQTGYKRLVMAGGVSANKQLRTDLAEMMKNLKGEVYYPRPQFCTDNGAMIAYTGFLRLKNGETSDLSISVKPRWNMTELPDISTTGG</sequence>
<proteinExistence type="inferred from homology"/>
<feature type="chain" id="PRO_0000303246" description="tRNA N6-adenosine threonylcarbamoyltransferase">
    <location>
        <begin position="1"/>
        <end position="347"/>
    </location>
</feature>
<feature type="binding site" evidence="1">
    <location>
        <position position="111"/>
    </location>
    <ligand>
        <name>Fe cation</name>
        <dbReference type="ChEBI" id="CHEBI:24875"/>
    </ligand>
</feature>
<feature type="binding site" evidence="1">
    <location>
        <position position="115"/>
    </location>
    <ligand>
        <name>Fe cation</name>
        <dbReference type="ChEBI" id="CHEBI:24875"/>
    </ligand>
</feature>
<feature type="binding site" evidence="1">
    <location>
        <begin position="134"/>
        <end position="138"/>
    </location>
    <ligand>
        <name>substrate</name>
    </ligand>
</feature>
<feature type="binding site" evidence="1">
    <location>
        <position position="167"/>
    </location>
    <ligand>
        <name>substrate</name>
    </ligand>
</feature>
<feature type="binding site" evidence="1">
    <location>
        <position position="180"/>
    </location>
    <ligand>
        <name>substrate</name>
    </ligand>
</feature>
<feature type="binding site" evidence="1">
    <location>
        <position position="277"/>
    </location>
    <ligand>
        <name>substrate</name>
    </ligand>
</feature>
<feature type="binding site" evidence="1">
    <location>
        <position position="305"/>
    </location>
    <ligand>
        <name>Fe cation</name>
        <dbReference type="ChEBI" id="CHEBI:24875"/>
    </ligand>
</feature>
<name>TSAD_ACTP2</name>
<gene>
    <name evidence="1" type="primary">tsaD</name>
    <name type="synonym">gcp</name>
    <name type="ordered locus">APL_1120</name>
</gene>
<dbReference type="EC" id="2.3.1.234" evidence="1"/>
<dbReference type="EMBL" id="CP000569">
    <property type="protein sequence ID" value="ABN74210.1"/>
    <property type="molecule type" value="Genomic_DNA"/>
</dbReference>
<dbReference type="RefSeq" id="WP_005598001.1">
    <property type="nucleotide sequence ID" value="NC_009053.1"/>
</dbReference>
<dbReference type="SMR" id="A3N1C4"/>
<dbReference type="STRING" id="416269.APL_1120"/>
<dbReference type="EnsemblBacteria" id="ABN74210">
    <property type="protein sequence ID" value="ABN74210"/>
    <property type="gene ID" value="APL_1120"/>
</dbReference>
<dbReference type="GeneID" id="48599352"/>
<dbReference type="KEGG" id="apl:APL_1120"/>
<dbReference type="eggNOG" id="COG0533">
    <property type="taxonomic scope" value="Bacteria"/>
</dbReference>
<dbReference type="HOGENOM" id="CLU_023208_0_0_6"/>
<dbReference type="Proteomes" id="UP000001432">
    <property type="component" value="Chromosome"/>
</dbReference>
<dbReference type="GO" id="GO:0005737">
    <property type="term" value="C:cytoplasm"/>
    <property type="evidence" value="ECO:0007669"/>
    <property type="project" value="UniProtKB-SubCell"/>
</dbReference>
<dbReference type="GO" id="GO:0005506">
    <property type="term" value="F:iron ion binding"/>
    <property type="evidence" value="ECO:0007669"/>
    <property type="project" value="UniProtKB-UniRule"/>
</dbReference>
<dbReference type="GO" id="GO:0061711">
    <property type="term" value="F:N(6)-L-threonylcarbamoyladenine synthase activity"/>
    <property type="evidence" value="ECO:0007669"/>
    <property type="project" value="UniProtKB-EC"/>
</dbReference>
<dbReference type="GO" id="GO:0002949">
    <property type="term" value="P:tRNA threonylcarbamoyladenosine modification"/>
    <property type="evidence" value="ECO:0007669"/>
    <property type="project" value="UniProtKB-UniRule"/>
</dbReference>
<dbReference type="CDD" id="cd24133">
    <property type="entry name" value="ASKHA_NBD_TsaD_bac"/>
    <property type="match status" value="1"/>
</dbReference>
<dbReference type="FunFam" id="3.30.420.40:FF:000031">
    <property type="entry name" value="tRNA N6-adenosine threonylcarbamoyltransferase"/>
    <property type="match status" value="1"/>
</dbReference>
<dbReference type="Gene3D" id="3.30.420.40">
    <property type="match status" value="2"/>
</dbReference>
<dbReference type="HAMAP" id="MF_01445">
    <property type="entry name" value="TsaD"/>
    <property type="match status" value="1"/>
</dbReference>
<dbReference type="InterPro" id="IPR043129">
    <property type="entry name" value="ATPase_NBD"/>
</dbReference>
<dbReference type="InterPro" id="IPR000905">
    <property type="entry name" value="Gcp-like_dom"/>
</dbReference>
<dbReference type="InterPro" id="IPR017861">
    <property type="entry name" value="KAE1/TsaD"/>
</dbReference>
<dbReference type="InterPro" id="IPR017860">
    <property type="entry name" value="Peptidase_M22_CS"/>
</dbReference>
<dbReference type="InterPro" id="IPR022450">
    <property type="entry name" value="TsaD"/>
</dbReference>
<dbReference type="NCBIfam" id="TIGR00329">
    <property type="entry name" value="gcp_kae1"/>
    <property type="match status" value="1"/>
</dbReference>
<dbReference type="NCBIfam" id="TIGR03723">
    <property type="entry name" value="T6A_TsaD_YgjD"/>
    <property type="match status" value="1"/>
</dbReference>
<dbReference type="PANTHER" id="PTHR11735">
    <property type="entry name" value="TRNA N6-ADENOSINE THREONYLCARBAMOYLTRANSFERASE"/>
    <property type="match status" value="1"/>
</dbReference>
<dbReference type="PANTHER" id="PTHR11735:SF6">
    <property type="entry name" value="TRNA N6-ADENOSINE THREONYLCARBAMOYLTRANSFERASE, MITOCHONDRIAL"/>
    <property type="match status" value="1"/>
</dbReference>
<dbReference type="Pfam" id="PF00814">
    <property type="entry name" value="TsaD"/>
    <property type="match status" value="1"/>
</dbReference>
<dbReference type="PRINTS" id="PR00789">
    <property type="entry name" value="OSIALOPTASE"/>
</dbReference>
<dbReference type="SUPFAM" id="SSF53067">
    <property type="entry name" value="Actin-like ATPase domain"/>
    <property type="match status" value="2"/>
</dbReference>
<dbReference type="PROSITE" id="PS01016">
    <property type="entry name" value="GLYCOPROTEASE"/>
    <property type="match status" value="1"/>
</dbReference>
<reference key="1">
    <citation type="journal article" date="2008" name="J. Bacteriol.">
        <title>The complete genome sequence of Actinobacillus pleuropneumoniae L20 (serotype 5b).</title>
        <authorList>
            <person name="Foote S.J."/>
            <person name="Bosse J.T."/>
            <person name="Bouevitch A.B."/>
            <person name="Langford P.R."/>
            <person name="Young N.M."/>
            <person name="Nash J.H.E."/>
        </authorList>
    </citation>
    <scope>NUCLEOTIDE SEQUENCE [LARGE SCALE GENOMIC DNA]</scope>
    <source>
        <strain>L20</strain>
    </source>
</reference>
<organism>
    <name type="scientific">Actinobacillus pleuropneumoniae serotype 5b (strain L20)</name>
    <dbReference type="NCBI Taxonomy" id="416269"/>
    <lineage>
        <taxon>Bacteria</taxon>
        <taxon>Pseudomonadati</taxon>
        <taxon>Pseudomonadota</taxon>
        <taxon>Gammaproteobacteria</taxon>
        <taxon>Pasteurellales</taxon>
        <taxon>Pasteurellaceae</taxon>
        <taxon>Actinobacillus</taxon>
    </lineage>
</organism>
<accession>A3N1C4</accession>
<comment type="function">
    <text evidence="1">Required for the formation of a threonylcarbamoyl group on adenosine at position 37 (t(6)A37) in tRNAs that read codons beginning with adenine. Is involved in the transfer of the threonylcarbamoyl moiety of threonylcarbamoyl-AMP (TC-AMP) to the N6 group of A37, together with TsaE and TsaB. TsaD likely plays a direct catalytic role in this reaction.</text>
</comment>
<comment type="catalytic activity">
    <reaction evidence="1">
        <text>L-threonylcarbamoyladenylate + adenosine(37) in tRNA = N(6)-L-threonylcarbamoyladenosine(37) in tRNA + AMP + H(+)</text>
        <dbReference type="Rhea" id="RHEA:37059"/>
        <dbReference type="Rhea" id="RHEA-COMP:10162"/>
        <dbReference type="Rhea" id="RHEA-COMP:10163"/>
        <dbReference type="ChEBI" id="CHEBI:15378"/>
        <dbReference type="ChEBI" id="CHEBI:73682"/>
        <dbReference type="ChEBI" id="CHEBI:74411"/>
        <dbReference type="ChEBI" id="CHEBI:74418"/>
        <dbReference type="ChEBI" id="CHEBI:456215"/>
        <dbReference type="EC" id="2.3.1.234"/>
    </reaction>
</comment>
<comment type="cofactor">
    <cofactor evidence="1">
        <name>Fe(2+)</name>
        <dbReference type="ChEBI" id="CHEBI:29033"/>
    </cofactor>
    <text evidence="1">Binds 1 Fe(2+) ion per subunit.</text>
</comment>
<comment type="subcellular location">
    <subcellularLocation>
        <location evidence="1">Cytoplasm</location>
    </subcellularLocation>
</comment>
<comment type="similarity">
    <text evidence="1">Belongs to the KAE1 / TsaD family.</text>
</comment>
<protein>
    <recommendedName>
        <fullName evidence="1">tRNA N6-adenosine threonylcarbamoyltransferase</fullName>
        <ecNumber evidence="1">2.3.1.234</ecNumber>
    </recommendedName>
    <alternativeName>
        <fullName evidence="1">N6-L-threonylcarbamoyladenine synthase</fullName>
        <shortName evidence="1">t(6)A synthase</shortName>
    </alternativeName>
    <alternativeName>
        <fullName evidence="1">t(6)A37 threonylcarbamoyladenosine biosynthesis protein TsaD</fullName>
    </alternativeName>
    <alternativeName>
        <fullName evidence="1">tRNA threonylcarbamoyladenosine biosynthesis protein TsaD</fullName>
    </alternativeName>
</protein>
<keyword id="KW-0012">Acyltransferase</keyword>
<keyword id="KW-0963">Cytoplasm</keyword>
<keyword id="KW-0408">Iron</keyword>
<keyword id="KW-0479">Metal-binding</keyword>
<keyword id="KW-1185">Reference proteome</keyword>
<keyword id="KW-0808">Transferase</keyword>
<keyword id="KW-0819">tRNA processing</keyword>
<evidence type="ECO:0000255" key="1">
    <source>
        <dbReference type="HAMAP-Rule" id="MF_01445"/>
    </source>
</evidence>